<feature type="chain" id="PRO_1000094102" description="Ribonuclease 3">
    <location>
        <begin position="1"/>
        <end position="232"/>
    </location>
</feature>
<feature type="domain" description="RNase III" evidence="1">
    <location>
        <begin position="6"/>
        <end position="133"/>
    </location>
</feature>
<feature type="domain" description="DRBM" evidence="1">
    <location>
        <begin position="160"/>
        <end position="229"/>
    </location>
</feature>
<feature type="active site" evidence="1">
    <location>
        <position position="50"/>
    </location>
</feature>
<feature type="active site" evidence="1">
    <location>
        <position position="122"/>
    </location>
</feature>
<feature type="binding site" evidence="1">
    <location>
        <position position="46"/>
    </location>
    <ligand>
        <name>Mg(2+)</name>
        <dbReference type="ChEBI" id="CHEBI:18420"/>
    </ligand>
</feature>
<feature type="binding site" evidence="1">
    <location>
        <position position="119"/>
    </location>
    <ligand>
        <name>Mg(2+)</name>
        <dbReference type="ChEBI" id="CHEBI:18420"/>
    </ligand>
</feature>
<feature type="binding site" evidence="1">
    <location>
        <position position="122"/>
    </location>
    <ligand>
        <name>Mg(2+)</name>
        <dbReference type="ChEBI" id="CHEBI:18420"/>
    </ligand>
</feature>
<comment type="function">
    <text evidence="1">Digests double-stranded RNA. Involved in the processing of primary rRNA transcript to yield the immediate precursors to the large and small rRNAs (23S and 16S). Processes some mRNAs, and tRNAs when they are encoded in the rRNA operon. Processes pre-crRNA and tracrRNA of type II CRISPR loci if present in the organism.</text>
</comment>
<comment type="catalytic activity">
    <reaction evidence="1">
        <text>Endonucleolytic cleavage to 5'-phosphomonoester.</text>
        <dbReference type="EC" id="3.1.26.3"/>
    </reaction>
</comment>
<comment type="cofactor">
    <cofactor evidence="1">
        <name>Mg(2+)</name>
        <dbReference type="ChEBI" id="CHEBI:18420"/>
    </cofactor>
</comment>
<comment type="subunit">
    <text evidence="1">Homodimer.</text>
</comment>
<comment type="subcellular location">
    <subcellularLocation>
        <location evidence="1">Cytoplasm</location>
    </subcellularLocation>
</comment>
<comment type="similarity">
    <text evidence="1">Belongs to the ribonuclease III family.</text>
</comment>
<evidence type="ECO:0000255" key="1">
    <source>
        <dbReference type="HAMAP-Rule" id="MF_00104"/>
    </source>
</evidence>
<keyword id="KW-0963">Cytoplasm</keyword>
<keyword id="KW-0255">Endonuclease</keyword>
<keyword id="KW-0378">Hydrolase</keyword>
<keyword id="KW-0460">Magnesium</keyword>
<keyword id="KW-0479">Metal-binding</keyword>
<keyword id="KW-0507">mRNA processing</keyword>
<keyword id="KW-0540">Nuclease</keyword>
<keyword id="KW-0694">RNA-binding</keyword>
<keyword id="KW-0698">rRNA processing</keyword>
<keyword id="KW-0699">rRNA-binding</keyword>
<keyword id="KW-0819">tRNA processing</keyword>
<organism>
    <name type="scientific">Clostridium botulinum (strain Eklund 17B / Type B)</name>
    <dbReference type="NCBI Taxonomy" id="935198"/>
    <lineage>
        <taxon>Bacteria</taxon>
        <taxon>Bacillati</taxon>
        <taxon>Bacillota</taxon>
        <taxon>Clostridia</taxon>
        <taxon>Eubacteriales</taxon>
        <taxon>Clostridiaceae</taxon>
        <taxon>Clostridium</taxon>
    </lineage>
</organism>
<name>RNC_CLOBB</name>
<proteinExistence type="inferred from homology"/>
<accession>B2TJ22</accession>
<gene>
    <name evidence="1" type="primary">rnc</name>
    <name type="ordered locus">CLL_A1240</name>
</gene>
<protein>
    <recommendedName>
        <fullName evidence="1">Ribonuclease 3</fullName>
        <ecNumber evidence="1">3.1.26.3</ecNumber>
    </recommendedName>
    <alternativeName>
        <fullName evidence="1">Ribonuclease III</fullName>
        <shortName evidence="1">RNase III</shortName>
    </alternativeName>
</protein>
<reference key="1">
    <citation type="submission" date="2008-04" db="EMBL/GenBank/DDBJ databases">
        <title>Complete sequence of Clostridium botulinum strain Eklund.</title>
        <authorList>
            <person name="Brinkac L.M."/>
            <person name="Brown J.L."/>
            <person name="Bruce D."/>
            <person name="Detter C."/>
            <person name="Munk C."/>
            <person name="Smith L.A."/>
            <person name="Smith T.J."/>
            <person name="Sutton G."/>
            <person name="Brettin T.S."/>
        </authorList>
    </citation>
    <scope>NUCLEOTIDE SEQUENCE [LARGE SCALE GENOMIC DNA]</scope>
    <source>
        <strain>Eklund 17B / Type B</strain>
    </source>
</reference>
<sequence>MNRYKFNDIENRLGVYFNNPSLIKTALTHSSFGNQFKDAKYNERLEFLGDSVLQLCITEYLFNKFKDKSEGELTKIRSLIVCENSLYEIAKKLSLGEYIRMSKGEELTGGRERMSIQADAVEAVIAAVYLDKGIGFVNDFILLHFEEMINKAINNEIVLDFKTKLQELLQKDGEILIQYELVKYEGPPHRRKFFTNVIINEKVMGIGEGYSKKEAEQNAAKEALKRLEKNYE</sequence>
<dbReference type="EC" id="3.1.26.3" evidence="1"/>
<dbReference type="EMBL" id="CP001056">
    <property type="protein sequence ID" value="ACD22926.1"/>
    <property type="molecule type" value="Genomic_DNA"/>
</dbReference>
<dbReference type="SMR" id="B2TJ22"/>
<dbReference type="KEGG" id="cbk:CLL_A1240"/>
<dbReference type="PATRIC" id="fig|935198.13.peg.1185"/>
<dbReference type="HOGENOM" id="CLU_000907_1_3_9"/>
<dbReference type="Proteomes" id="UP000001195">
    <property type="component" value="Chromosome"/>
</dbReference>
<dbReference type="GO" id="GO:0005737">
    <property type="term" value="C:cytoplasm"/>
    <property type="evidence" value="ECO:0007669"/>
    <property type="project" value="UniProtKB-SubCell"/>
</dbReference>
<dbReference type="GO" id="GO:0003725">
    <property type="term" value="F:double-stranded RNA binding"/>
    <property type="evidence" value="ECO:0007669"/>
    <property type="project" value="TreeGrafter"/>
</dbReference>
<dbReference type="GO" id="GO:0046872">
    <property type="term" value="F:metal ion binding"/>
    <property type="evidence" value="ECO:0007669"/>
    <property type="project" value="UniProtKB-KW"/>
</dbReference>
<dbReference type="GO" id="GO:0004525">
    <property type="term" value="F:ribonuclease III activity"/>
    <property type="evidence" value="ECO:0007669"/>
    <property type="project" value="UniProtKB-UniRule"/>
</dbReference>
<dbReference type="GO" id="GO:0019843">
    <property type="term" value="F:rRNA binding"/>
    <property type="evidence" value="ECO:0007669"/>
    <property type="project" value="UniProtKB-KW"/>
</dbReference>
<dbReference type="GO" id="GO:0006397">
    <property type="term" value="P:mRNA processing"/>
    <property type="evidence" value="ECO:0007669"/>
    <property type="project" value="UniProtKB-UniRule"/>
</dbReference>
<dbReference type="GO" id="GO:0010468">
    <property type="term" value="P:regulation of gene expression"/>
    <property type="evidence" value="ECO:0007669"/>
    <property type="project" value="TreeGrafter"/>
</dbReference>
<dbReference type="GO" id="GO:0006364">
    <property type="term" value="P:rRNA processing"/>
    <property type="evidence" value="ECO:0007669"/>
    <property type="project" value="UniProtKB-UniRule"/>
</dbReference>
<dbReference type="GO" id="GO:0008033">
    <property type="term" value="P:tRNA processing"/>
    <property type="evidence" value="ECO:0007669"/>
    <property type="project" value="UniProtKB-KW"/>
</dbReference>
<dbReference type="CDD" id="cd10845">
    <property type="entry name" value="DSRM_RNAse_III_family"/>
    <property type="match status" value="1"/>
</dbReference>
<dbReference type="CDD" id="cd00593">
    <property type="entry name" value="RIBOc"/>
    <property type="match status" value="1"/>
</dbReference>
<dbReference type="FunFam" id="1.10.1520.10:FF:000001">
    <property type="entry name" value="Ribonuclease 3"/>
    <property type="match status" value="1"/>
</dbReference>
<dbReference type="FunFam" id="3.30.160.20:FF:000003">
    <property type="entry name" value="Ribonuclease 3"/>
    <property type="match status" value="1"/>
</dbReference>
<dbReference type="Gene3D" id="3.30.160.20">
    <property type="match status" value="1"/>
</dbReference>
<dbReference type="Gene3D" id="1.10.1520.10">
    <property type="entry name" value="Ribonuclease III domain"/>
    <property type="match status" value="1"/>
</dbReference>
<dbReference type="HAMAP" id="MF_00104">
    <property type="entry name" value="RNase_III"/>
    <property type="match status" value="1"/>
</dbReference>
<dbReference type="InterPro" id="IPR014720">
    <property type="entry name" value="dsRBD_dom"/>
</dbReference>
<dbReference type="InterPro" id="IPR011907">
    <property type="entry name" value="RNase_III"/>
</dbReference>
<dbReference type="InterPro" id="IPR000999">
    <property type="entry name" value="RNase_III_dom"/>
</dbReference>
<dbReference type="InterPro" id="IPR036389">
    <property type="entry name" value="RNase_III_sf"/>
</dbReference>
<dbReference type="NCBIfam" id="TIGR02191">
    <property type="entry name" value="RNaseIII"/>
    <property type="match status" value="1"/>
</dbReference>
<dbReference type="PANTHER" id="PTHR11207:SF0">
    <property type="entry name" value="RIBONUCLEASE 3"/>
    <property type="match status" value="1"/>
</dbReference>
<dbReference type="PANTHER" id="PTHR11207">
    <property type="entry name" value="RIBONUCLEASE III"/>
    <property type="match status" value="1"/>
</dbReference>
<dbReference type="Pfam" id="PF00035">
    <property type="entry name" value="dsrm"/>
    <property type="match status" value="1"/>
</dbReference>
<dbReference type="Pfam" id="PF14622">
    <property type="entry name" value="Ribonucleas_3_3"/>
    <property type="match status" value="1"/>
</dbReference>
<dbReference type="SMART" id="SM00358">
    <property type="entry name" value="DSRM"/>
    <property type="match status" value="1"/>
</dbReference>
<dbReference type="SMART" id="SM00535">
    <property type="entry name" value="RIBOc"/>
    <property type="match status" value="1"/>
</dbReference>
<dbReference type="SUPFAM" id="SSF54768">
    <property type="entry name" value="dsRNA-binding domain-like"/>
    <property type="match status" value="1"/>
</dbReference>
<dbReference type="SUPFAM" id="SSF69065">
    <property type="entry name" value="RNase III domain-like"/>
    <property type="match status" value="1"/>
</dbReference>
<dbReference type="PROSITE" id="PS50137">
    <property type="entry name" value="DS_RBD"/>
    <property type="match status" value="1"/>
</dbReference>
<dbReference type="PROSITE" id="PS00517">
    <property type="entry name" value="RNASE_3_1"/>
    <property type="match status" value="1"/>
</dbReference>
<dbReference type="PROSITE" id="PS50142">
    <property type="entry name" value="RNASE_3_2"/>
    <property type="match status" value="1"/>
</dbReference>